<gene>
    <name evidence="1" type="primary">rpsJ</name>
    <name type="ordered locus">FTM_1528</name>
</gene>
<organism>
    <name type="scientific">Francisella tularensis subsp. mediasiatica (strain FSC147)</name>
    <dbReference type="NCBI Taxonomy" id="441952"/>
    <lineage>
        <taxon>Bacteria</taxon>
        <taxon>Pseudomonadati</taxon>
        <taxon>Pseudomonadota</taxon>
        <taxon>Gammaproteobacteria</taxon>
        <taxon>Thiotrichales</taxon>
        <taxon>Francisellaceae</taxon>
        <taxon>Francisella</taxon>
    </lineage>
</organism>
<sequence length="105" mass="11924">MAINNQRIRIRLKAFDHKLIDISTQEIVDTAKKTGAQVKGPIPLPVRKERFTILISPHVNKKARDQYEIRTHKRLIDIVEPTDKTVDALMKLDLASGVDVQISLS</sequence>
<feature type="chain" id="PRO_1000127129" description="Small ribosomal subunit protein uS10">
    <location>
        <begin position="1"/>
        <end position="105"/>
    </location>
</feature>
<comment type="function">
    <text evidence="1">Involved in the binding of tRNA to the ribosomes.</text>
</comment>
<comment type="subunit">
    <text evidence="1">Part of the 30S ribosomal subunit.</text>
</comment>
<comment type="similarity">
    <text evidence="1">Belongs to the universal ribosomal protein uS10 family.</text>
</comment>
<protein>
    <recommendedName>
        <fullName evidence="1">Small ribosomal subunit protein uS10</fullName>
    </recommendedName>
    <alternativeName>
        <fullName evidence="2">30S ribosomal protein S10</fullName>
    </alternativeName>
</protein>
<name>RS10_FRATM</name>
<evidence type="ECO:0000255" key="1">
    <source>
        <dbReference type="HAMAP-Rule" id="MF_00508"/>
    </source>
</evidence>
<evidence type="ECO:0000305" key="2"/>
<keyword id="KW-0687">Ribonucleoprotein</keyword>
<keyword id="KW-0689">Ribosomal protein</keyword>
<reference key="1">
    <citation type="journal article" date="2009" name="PLoS Pathog.">
        <title>Molecular evolutionary consequences of niche restriction in Francisella tularensis, a facultative intracellular pathogen.</title>
        <authorList>
            <person name="Larsson P."/>
            <person name="Elfsmark D."/>
            <person name="Svensson K."/>
            <person name="Wikstroem P."/>
            <person name="Forsman M."/>
            <person name="Brettin T."/>
            <person name="Keim P."/>
            <person name="Johansson A."/>
        </authorList>
    </citation>
    <scope>NUCLEOTIDE SEQUENCE [LARGE SCALE GENOMIC DNA]</scope>
    <source>
        <strain>FSC147</strain>
    </source>
</reference>
<accession>B2SDY6</accession>
<proteinExistence type="inferred from homology"/>
<dbReference type="EMBL" id="CP000915">
    <property type="protein sequence ID" value="ACD31350.1"/>
    <property type="molecule type" value="Genomic_DNA"/>
</dbReference>
<dbReference type="SMR" id="B2SDY6"/>
<dbReference type="KEGG" id="ftm:FTM_1528"/>
<dbReference type="HOGENOM" id="CLU_122625_1_3_6"/>
<dbReference type="GO" id="GO:1990904">
    <property type="term" value="C:ribonucleoprotein complex"/>
    <property type="evidence" value="ECO:0007669"/>
    <property type="project" value="UniProtKB-KW"/>
</dbReference>
<dbReference type="GO" id="GO:0005840">
    <property type="term" value="C:ribosome"/>
    <property type="evidence" value="ECO:0007669"/>
    <property type="project" value="UniProtKB-KW"/>
</dbReference>
<dbReference type="GO" id="GO:0003735">
    <property type="term" value="F:structural constituent of ribosome"/>
    <property type="evidence" value="ECO:0007669"/>
    <property type="project" value="InterPro"/>
</dbReference>
<dbReference type="GO" id="GO:0000049">
    <property type="term" value="F:tRNA binding"/>
    <property type="evidence" value="ECO:0007669"/>
    <property type="project" value="UniProtKB-UniRule"/>
</dbReference>
<dbReference type="GO" id="GO:0006412">
    <property type="term" value="P:translation"/>
    <property type="evidence" value="ECO:0007669"/>
    <property type="project" value="UniProtKB-UniRule"/>
</dbReference>
<dbReference type="FunFam" id="3.30.70.600:FF:000001">
    <property type="entry name" value="30S ribosomal protein S10"/>
    <property type="match status" value="1"/>
</dbReference>
<dbReference type="Gene3D" id="3.30.70.600">
    <property type="entry name" value="Ribosomal protein S10 domain"/>
    <property type="match status" value="1"/>
</dbReference>
<dbReference type="HAMAP" id="MF_00508">
    <property type="entry name" value="Ribosomal_uS10"/>
    <property type="match status" value="1"/>
</dbReference>
<dbReference type="InterPro" id="IPR001848">
    <property type="entry name" value="Ribosomal_uS10"/>
</dbReference>
<dbReference type="InterPro" id="IPR027486">
    <property type="entry name" value="Ribosomal_uS10_dom"/>
</dbReference>
<dbReference type="InterPro" id="IPR036838">
    <property type="entry name" value="Ribosomal_uS10_dom_sf"/>
</dbReference>
<dbReference type="NCBIfam" id="NF001861">
    <property type="entry name" value="PRK00596.1"/>
    <property type="match status" value="1"/>
</dbReference>
<dbReference type="NCBIfam" id="TIGR01049">
    <property type="entry name" value="rpsJ_bact"/>
    <property type="match status" value="1"/>
</dbReference>
<dbReference type="PANTHER" id="PTHR11700">
    <property type="entry name" value="30S RIBOSOMAL PROTEIN S10 FAMILY MEMBER"/>
    <property type="match status" value="1"/>
</dbReference>
<dbReference type="Pfam" id="PF00338">
    <property type="entry name" value="Ribosomal_S10"/>
    <property type="match status" value="1"/>
</dbReference>
<dbReference type="PRINTS" id="PR00971">
    <property type="entry name" value="RIBOSOMALS10"/>
</dbReference>
<dbReference type="SMART" id="SM01403">
    <property type="entry name" value="Ribosomal_S10"/>
    <property type="match status" value="1"/>
</dbReference>
<dbReference type="SUPFAM" id="SSF54999">
    <property type="entry name" value="Ribosomal protein S10"/>
    <property type="match status" value="1"/>
</dbReference>